<feature type="chain" id="PRO_0000063990" description="Aquaporin Z">
    <location>
        <begin position="1"/>
        <end position="231"/>
    </location>
</feature>
<feature type="transmembrane region" description="Helical" evidence="1">
    <location>
        <begin position="9"/>
        <end position="29"/>
    </location>
</feature>
<feature type="transmembrane region" description="Helical" evidence="1">
    <location>
        <begin position="34"/>
        <end position="54"/>
    </location>
</feature>
<feature type="transmembrane region" description="Helical" evidence="1">
    <location>
        <begin position="82"/>
        <end position="102"/>
    </location>
</feature>
<feature type="transmembrane region" description="Helical" evidence="1">
    <location>
        <begin position="129"/>
        <end position="149"/>
    </location>
</feature>
<feature type="transmembrane region" description="Helical" evidence="1">
    <location>
        <begin position="156"/>
        <end position="176"/>
    </location>
</feature>
<feature type="transmembrane region" description="Helical" evidence="1">
    <location>
        <begin position="202"/>
        <end position="222"/>
    </location>
</feature>
<feature type="short sequence motif" description="NPA 1" evidence="1">
    <location>
        <begin position="63"/>
        <end position="65"/>
    </location>
</feature>
<feature type="short sequence motif" description="NPA 2" evidence="1">
    <location>
        <begin position="186"/>
        <end position="188"/>
    </location>
</feature>
<feature type="site" description="Involved in tetramerization or stability of the tetramer" evidence="1">
    <location>
        <position position="20"/>
    </location>
</feature>
<feature type="site" description="Selectivity filter" evidence="1">
    <location>
        <position position="43"/>
    </location>
</feature>
<feature type="site" description="Selectivity filter" evidence="1">
    <location>
        <position position="174"/>
    </location>
</feature>
<feature type="site" description="Selectivity filter" evidence="1">
    <location>
        <position position="183"/>
    </location>
</feature>
<feature type="site" description="Selectivity filter" evidence="1">
    <location>
        <position position="189"/>
    </location>
</feature>
<dbReference type="EMBL" id="AE014075">
    <property type="protein sequence ID" value="AAN79482.1"/>
    <property type="status" value="ALT_INIT"/>
    <property type="molecule type" value="Genomic_DNA"/>
</dbReference>
<dbReference type="RefSeq" id="WP_001298299.1">
    <property type="nucleotide sequence ID" value="NZ_CP051263.1"/>
</dbReference>
<dbReference type="SMR" id="P60845"/>
<dbReference type="STRING" id="199310.c1009"/>
<dbReference type="GeneID" id="75170949"/>
<dbReference type="KEGG" id="ecc:c1009"/>
<dbReference type="eggNOG" id="COG0580">
    <property type="taxonomic scope" value="Bacteria"/>
</dbReference>
<dbReference type="HOGENOM" id="CLU_020019_3_2_6"/>
<dbReference type="Proteomes" id="UP000001410">
    <property type="component" value="Chromosome"/>
</dbReference>
<dbReference type="GO" id="GO:0005886">
    <property type="term" value="C:plasma membrane"/>
    <property type="evidence" value="ECO:0007669"/>
    <property type="project" value="UniProtKB-SubCell"/>
</dbReference>
<dbReference type="GO" id="GO:0015250">
    <property type="term" value="F:water channel activity"/>
    <property type="evidence" value="ECO:0007669"/>
    <property type="project" value="UniProtKB-UniRule"/>
</dbReference>
<dbReference type="CDD" id="cd00333">
    <property type="entry name" value="MIP"/>
    <property type="match status" value="1"/>
</dbReference>
<dbReference type="FunFam" id="1.20.1080.10:FF:000007">
    <property type="entry name" value="Aquaporin Z"/>
    <property type="match status" value="1"/>
</dbReference>
<dbReference type="Gene3D" id="1.20.1080.10">
    <property type="entry name" value="Glycerol uptake facilitator protein"/>
    <property type="match status" value="1"/>
</dbReference>
<dbReference type="HAMAP" id="MF_01146">
    <property type="entry name" value="Aquaporin_Z"/>
    <property type="match status" value="1"/>
</dbReference>
<dbReference type="InterPro" id="IPR023271">
    <property type="entry name" value="Aquaporin-like"/>
</dbReference>
<dbReference type="InterPro" id="IPR034294">
    <property type="entry name" value="Aquaporin_transptr"/>
</dbReference>
<dbReference type="InterPro" id="IPR023743">
    <property type="entry name" value="Aquaporin_Z"/>
</dbReference>
<dbReference type="InterPro" id="IPR000425">
    <property type="entry name" value="MIP"/>
</dbReference>
<dbReference type="InterPro" id="IPR022357">
    <property type="entry name" value="MIP_CS"/>
</dbReference>
<dbReference type="NCBIfam" id="TIGR00861">
    <property type="entry name" value="MIP"/>
    <property type="match status" value="1"/>
</dbReference>
<dbReference type="NCBIfam" id="NF003838">
    <property type="entry name" value="PRK05420.1"/>
    <property type="match status" value="1"/>
</dbReference>
<dbReference type="PANTHER" id="PTHR19139">
    <property type="entry name" value="AQUAPORIN TRANSPORTER"/>
    <property type="match status" value="1"/>
</dbReference>
<dbReference type="PANTHER" id="PTHR19139:SF199">
    <property type="entry name" value="MIP17260P"/>
    <property type="match status" value="1"/>
</dbReference>
<dbReference type="Pfam" id="PF00230">
    <property type="entry name" value="MIP"/>
    <property type="match status" value="1"/>
</dbReference>
<dbReference type="PRINTS" id="PR00783">
    <property type="entry name" value="MINTRINSICP"/>
</dbReference>
<dbReference type="SUPFAM" id="SSF81338">
    <property type="entry name" value="Aquaporin-like"/>
    <property type="match status" value="1"/>
</dbReference>
<dbReference type="PROSITE" id="PS00221">
    <property type="entry name" value="MIP"/>
    <property type="match status" value="1"/>
</dbReference>
<protein>
    <recommendedName>
        <fullName evidence="1">Aquaporin Z</fullName>
    </recommendedName>
</protein>
<organism>
    <name type="scientific">Escherichia coli O6:H1 (strain CFT073 / ATCC 700928 / UPEC)</name>
    <dbReference type="NCBI Taxonomy" id="199310"/>
    <lineage>
        <taxon>Bacteria</taxon>
        <taxon>Pseudomonadati</taxon>
        <taxon>Pseudomonadota</taxon>
        <taxon>Gammaproteobacteria</taxon>
        <taxon>Enterobacterales</taxon>
        <taxon>Enterobacteriaceae</taxon>
        <taxon>Escherichia</taxon>
    </lineage>
</organism>
<gene>
    <name evidence="1" type="primary">aqpZ</name>
    <name type="synonym">bniP</name>
    <name type="ordered locus">c1009</name>
</gene>
<comment type="function">
    <text evidence="1">Channel that permits osmotically driven movement of water in both directions. It is involved in the osmoregulation and in the maintenance of cell turgor during volume expansion in rapidly growing cells. It mediates rapid entry or exit of water in response to abrupt changes in osmolarity.</text>
</comment>
<comment type="catalytic activity">
    <reaction evidence="1">
        <text>H2O(in) = H2O(out)</text>
        <dbReference type="Rhea" id="RHEA:29667"/>
        <dbReference type="ChEBI" id="CHEBI:15377"/>
    </reaction>
    <physiologicalReaction direction="left-to-right" evidence="1">
        <dbReference type="Rhea" id="RHEA:29668"/>
    </physiologicalReaction>
    <physiologicalReaction direction="right-to-left" evidence="1">
        <dbReference type="Rhea" id="RHEA:29669"/>
    </physiologicalReaction>
</comment>
<comment type="subunit">
    <text evidence="1">Homotetramer.</text>
</comment>
<comment type="subcellular location">
    <subcellularLocation>
        <location evidence="1">Cell inner membrane</location>
        <topology evidence="1">Multi-pass membrane protein</topology>
    </subcellularLocation>
</comment>
<comment type="domain">
    <text evidence="1">Aquaporins contain two tandem repeats each containing three membrane-spanning domains and a pore-forming loop with the signature motif Asn-Pro-Ala (NPA).</text>
</comment>
<comment type="similarity">
    <text evidence="1 2">Belongs to the MIP/aquaporin (TC 1.A.8) family.</text>
</comment>
<comment type="sequence caution" evidence="2">
    <conflict type="erroneous initiation">
        <sequence resource="EMBL-CDS" id="AAN79482"/>
    </conflict>
</comment>
<accession>P60845</accession>
<accession>P48838</accession>
<accession>P75827</accession>
<accession>Q47159</accession>
<sequence>MFRKLAAECFGTFWLVFGGCGSAVLAAGFPELGIGFAGVALAFGLTVLTMAFAVGHISGGHFNPAVTIGLWAGGRFPAKEVVGYVIAQVVGGIVAAALLYLIASGKTGFDAAASGFASNGYGEHSPGGYSMLSALVVELVLSAGFLLVIHGATDKFAPAGFAPIAIGLALTLIHLISIPVTNTSVNPARSTAVAIFQGGWALEQLWFFWVVPIVGGIIGGLIYRTLLEKRD</sequence>
<reference key="1">
    <citation type="journal article" date="2002" name="Proc. Natl. Acad. Sci. U.S.A.">
        <title>Extensive mosaic structure revealed by the complete genome sequence of uropathogenic Escherichia coli.</title>
        <authorList>
            <person name="Welch R.A."/>
            <person name="Burland V."/>
            <person name="Plunkett G. III"/>
            <person name="Redford P."/>
            <person name="Roesch P."/>
            <person name="Rasko D."/>
            <person name="Buckles E.L."/>
            <person name="Liou S.-R."/>
            <person name="Boutin A."/>
            <person name="Hackett J."/>
            <person name="Stroud D."/>
            <person name="Mayhew G.F."/>
            <person name="Rose D.J."/>
            <person name="Zhou S."/>
            <person name="Schwartz D.C."/>
            <person name="Perna N.T."/>
            <person name="Mobley H.L.T."/>
            <person name="Donnenberg M.S."/>
            <person name="Blattner F.R."/>
        </authorList>
    </citation>
    <scope>NUCLEOTIDE SEQUENCE [LARGE SCALE GENOMIC DNA]</scope>
    <source>
        <strain>CFT073 / ATCC 700928 / UPEC</strain>
    </source>
</reference>
<name>AQPZ_ECOL6</name>
<keyword id="KW-0997">Cell inner membrane</keyword>
<keyword id="KW-1003">Cell membrane</keyword>
<keyword id="KW-0472">Membrane</keyword>
<keyword id="KW-1185">Reference proteome</keyword>
<keyword id="KW-0677">Repeat</keyword>
<keyword id="KW-0812">Transmembrane</keyword>
<keyword id="KW-1133">Transmembrane helix</keyword>
<keyword id="KW-0813">Transport</keyword>
<evidence type="ECO:0000255" key="1">
    <source>
        <dbReference type="HAMAP-Rule" id="MF_01146"/>
    </source>
</evidence>
<evidence type="ECO:0000305" key="2"/>
<proteinExistence type="inferred from homology"/>